<organism>
    <name type="scientific">Scylla serrata</name>
    <name type="common">Mud crab</name>
    <dbReference type="NCBI Taxonomy" id="6761"/>
    <lineage>
        <taxon>Eukaryota</taxon>
        <taxon>Metazoa</taxon>
        <taxon>Ecdysozoa</taxon>
        <taxon>Arthropoda</taxon>
        <taxon>Crustacea</taxon>
        <taxon>Multicrustacea</taxon>
        <taxon>Malacostraca</taxon>
        <taxon>Eumalacostraca</taxon>
        <taxon>Eucarida</taxon>
        <taxon>Decapoda</taxon>
        <taxon>Pleocyemata</taxon>
        <taxon>Brachyura</taxon>
        <taxon>Eubrachyura</taxon>
        <taxon>Portunoidea</taxon>
        <taxon>Portunidae</taxon>
        <taxon>Portuninae</taxon>
        <taxon>Scylla</taxon>
    </lineage>
</organism>
<keyword id="KW-0002">3D-structure</keyword>
<keyword id="KW-0044">Antibiotic</keyword>
<keyword id="KW-0929">Antimicrobial</keyword>
<keyword id="KW-1015">Disulfide bond</keyword>
<keyword id="KW-0964">Secreted</keyword>
<keyword id="KW-0732">Signal</keyword>
<dbReference type="EMBL" id="FJ013272">
    <property type="protein sequence ID" value="ACH87655.1"/>
    <property type="molecule type" value="mRNA"/>
</dbReference>
<dbReference type="PDB" id="2MDL">
    <property type="method" value="NMR"/>
    <property type="chains" value="A=54-77"/>
</dbReference>
<dbReference type="PDBsum" id="2MDL"/>
<dbReference type="BMRB" id="B5TTX7"/>
<dbReference type="SMR" id="B5TTX7"/>
<dbReference type="EvolutionaryTrace" id="B5TTX7"/>
<dbReference type="GO" id="GO:0005576">
    <property type="term" value="C:extracellular region"/>
    <property type="evidence" value="ECO:0007669"/>
    <property type="project" value="UniProtKB-SubCell"/>
</dbReference>
<dbReference type="GO" id="GO:0042742">
    <property type="term" value="P:defense response to bacterium"/>
    <property type="evidence" value="ECO:0007669"/>
    <property type="project" value="UniProtKB-KW"/>
</dbReference>
<dbReference type="Gene3D" id="3.30.160.320">
    <property type="match status" value="1"/>
</dbReference>
<dbReference type="InterPro" id="IPR024509">
    <property type="entry name" value="Anti-LPS_factor/Scygonadin"/>
</dbReference>
<dbReference type="InterPro" id="IPR038539">
    <property type="entry name" value="Anti-LPS_factor/Scygonadin_sf"/>
</dbReference>
<dbReference type="Pfam" id="PF11630">
    <property type="entry name" value="Anti-LPS-SCYG"/>
    <property type="match status" value="1"/>
</dbReference>
<proteinExistence type="evidence at protein level"/>
<name>ALPS_SCYSE</name>
<feature type="signal peptide" evidence="2 7">
    <location>
        <begin position="1"/>
        <end position="26"/>
    </location>
</feature>
<feature type="chain" id="PRO_5000399109" description="Anti-lipopolysaccharide factor" evidence="2 7">
    <location>
        <begin position="27"/>
        <end position="123"/>
    </location>
</feature>
<feature type="disulfide bond" evidence="1">
    <location>
        <begin position="55"/>
        <end position="76"/>
    </location>
</feature>
<feature type="strand" evidence="8">
    <location>
        <begin position="65"/>
        <end position="68"/>
    </location>
</feature>
<feature type="strand" evidence="8">
    <location>
        <begin position="70"/>
        <end position="73"/>
    </location>
</feature>
<accession>B5TTX7</accession>
<sequence>MRTRVMAGLCVALVVMCLYMPQPCEAQYEALVASILGKLSGLWHSDTVDFMGHTCHIRRKPKFRKFKLYHEGKFWCPGWTHLEGNSRTKSRSGSTREATKDFVHKALQNKLITKNSADAWLKG</sequence>
<protein>
    <recommendedName>
        <fullName evidence="5 7">Anti-lipopolysaccharide factor</fullName>
        <shortName evidence="5">SsALF</shortName>
    </recommendedName>
</protein>
<comment type="function">
    <text evidence="3 4">Binds to bacterial LPS and may specifically inhibit the LPS-mediated activation of the hemolymph coagulation. It has a strong antibacterial effect especially on the growth of Gram-negative bacteria.</text>
</comment>
<comment type="subcellular location">
    <subcellularLocation>
        <location evidence="6">Secreted</location>
    </subcellularLocation>
</comment>
<comment type="tissue specificity">
    <text evidence="3">Strong expression in hemocytes, heart and muscle, with weaker expression detected in gills and hepatopancreas. No expression detected in eyes.</text>
</comment>
<comment type="induction">
    <text evidence="3">By injection with lipopolysaccharide. Expression is highest at 3 hours post-injection, decreases to basal levels at 12 hours post-injection and is up-regulated again at 24 hours post-injection. In the presence of recombinant ALF, the expression is significantly down-regulated at 3 hours and 6 hours post-injection.</text>
</comment>
<reference evidence="6 7" key="1">
    <citation type="journal article" date="2009" name="Fish Shellfish Immunol.">
        <title>Identification, cloning, characterization and recombinant expression of an anti-lipopolysaccharide factor from the hemocytes of Indian mud crab, Scylla serrata.</title>
        <authorList>
            <person name="Yedery R.D."/>
            <person name="Reddy K.V."/>
        </authorList>
    </citation>
    <scope>NUCLEOTIDE SEQUENCE [MRNA]</scope>
    <scope>FUNCTION</scope>
    <scope>TISSUE SPECIFICITY</scope>
    <scope>INDUCTION</scope>
    <source>
        <tissue evidence="3">Hemocyte</tissue>
    </source>
</reference>
<reference evidence="6" key="2">
    <citation type="journal article" date="2011" name="Microb. Pathog.">
        <title>Antibacterial activity of a synthetic peptide that mimics the LPS binding domain of Indian mud crab, Scylla serrata anti-lipopolysaccharide factor (SsALF) also involved in the modulation of vaginal immune functions through NF-kB signaling.</title>
        <authorList>
            <person name="Sharma S."/>
            <person name="Yedery R.D."/>
            <person name="Patgaonkar M.S."/>
            <person name="Selvaakumar C."/>
            <person name="Reddy K.V."/>
        </authorList>
    </citation>
    <scope>FUNCTION</scope>
</reference>
<evidence type="ECO:0000250" key="1">
    <source>
        <dbReference type="UniProtKB" id="P07086"/>
    </source>
</evidence>
<evidence type="ECO:0000255" key="2"/>
<evidence type="ECO:0000269" key="3">
    <source>
    </source>
</evidence>
<evidence type="ECO:0000269" key="4">
    <source>
    </source>
</evidence>
<evidence type="ECO:0000303" key="5">
    <source>
    </source>
</evidence>
<evidence type="ECO:0000305" key="6"/>
<evidence type="ECO:0000312" key="7">
    <source>
        <dbReference type="EMBL" id="ACH87655.1"/>
    </source>
</evidence>
<evidence type="ECO:0007829" key="8">
    <source>
        <dbReference type="PDB" id="2MDL"/>
    </source>
</evidence>